<evidence type="ECO:0000255" key="1">
    <source>
        <dbReference type="HAMAP-Rule" id="MF_01202"/>
    </source>
</evidence>
<reference key="1">
    <citation type="journal article" date="2008" name="J. Bacteriol.">
        <title>The pangenome structure of Escherichia coli: comparative genomic analysis of E. coli commensal and pathogenic isolates.</title>
        <authorList>
            <person name="Rasko D.A."/>
            <person name="Rosovitz M.J."/>
            <person name="Myers G.S.A."/>
            <person name="Mongodin E.F."/>
            <person name="Fricke W.F."/>
            <person name="Gajer P."/>
            <person name="Crabtree J."/>
            <person name="Sebaihia M."/>
            <person name="Thomson N.R."/>
            <person name="Chaudhuri R."/>
            <person name="Henderson I.R."/>
            <person name="Sperandio V."/>
            <person name="Ravel J."/>
        </authorList>
    </citation>
    <scope>NUCLEOTIDE SEQUENCE [LARGE SCALE GENOMIC DNA]</scope>
    <source>
        <strain>E24377A / ETEC</strain>
    </source>
</reference>
<sequence length="432" mass="47607">MRVVILGSGVVGVASAWYLNQAGHEVTVIDREPGAALETSAANAGQISPGYAAPWAAPGVPLKAIKWMFQRHAPLAVRLDGTQFQLKWMWQMLRNCDTSHYMENKGRMVRLAEYSRDCLKALRAETNIQYEGRQGGTLQLFRTEQQYENATRDIAVLEDAGVPYQLLESSRLAEVEPALAEVAHKLTGGLQLPNDETGDCQLFTQNLARMAEQAGVKFRFNTPVDQLLCDGEQIYGVKCGDEVIKADAYVMAFGSYSTAMLKGIVDIPVYPLKGYSLTIPIAQEDGAPVSTILDETYKIAITRFDNRIRVGGMAEIVGFNTELLQPRRETLEMVVRDLYPRGGHVEQATFWTGLRPMTPDGTPVVGRTRFKNLWLNTGHGTLGWTMACGSGQLLSDLLSGRTPAIPYEDLSVARYSRGFTPSRPGHLHGAHS</sequence>
<organism>
    <name type="scientific">Escherichia coli O139:H28 (strain E24377A / ETEC)</name>
    <dbReference type="NCBI Taxonomy" id="331111"/>
    <lineage>
        <taxon>Bacteria</taxon>
        <taxon>Pseudomonadati</taxon>
        <taxon>Pseudomonadota</taxon>
        <taxon>Gammaproteobacteria</taxon>
        <taxon>Enterobacterales</taxon>
        <taxon>Enterobacteriaceae</taxon>
        <taxon>Escherichia</taxon>
    </lineage>
</organism>
<dbReference type="EC" id="1.4.99.-" evidence="1"/>
<dbReference type="EMBL" id="CP000800">
    <property type="protein sequence ID" value="ABV19708.1"/>
    <property type="molecule type" value="Genomic_DNA"/>
</dbReference>
<dbReference type="RefSeq" id="WP_001266908.1">
    <property type="nucleotide sequence ID" value="NC_009801.1"/>
</dbReference>
<dbReference type="SMR" id="A7ZKW0"/>
<dbReference type="GeneID" id="93776243"/>
<dbReference type="KEGG" id="ecw:EcE24377A_1334"/>
<dbReference type="HOGENOM" id="CLU_007884_9_2_6"/>
<dbReference type="UniPathway" id="UPA00043">
    <property type="reaction ID" value="UER00498"/>
</dbReference>
<dbReference type="Proteomes" id="UP000001122">
    <property type="component" value="Chromosome"/>
</dbReference>
<dbReference type="GO" id="GO:0005737">
    <property type="term" value="C:cytoplasm"/>
    <property type="evidence" value="ECO:0007669"/>
    <property type="project" value="TreeGrafter"/>
</dbReference>
<dbReference type="GO" id="GO:0005886">
    <property type="term" value="C:plasma membrane"/>
    <property type="evidence" value="ECO:0007669"/>
    <property type="project" value="TreeGrafter"/>
</dbReference>
<dbReference type="GO" id="GO:0008718">
    <property type="term" value="F:D-amino-acid dehydrogenase activity"/>
    <property type="evidence" value="ECO:0007669"/>
    <property type="project" value="UniProtKB-UniRule"/>
</dbReference>
<dbReference type="GO" id="GO:0055130">
    <property type="term" value="P:D-alanine catabolic process"/>
    <property type="evidence" value="ECO:0007669"/>
    <property type="project" value="UniProtKB-UniPathway"/>
</dbReference>
<dbReference type="FunFam" id="3.50.50.60:FF:000020">
    <property type="entry name" value="D-amino acid dehydrogenase"/>
    <property type="match status" value="1"/>
</dbReference>
<dbReference type="Gene3D" id="3.30.9.10">
    <property type="entry name" value="D-Amino Acid Oxidase, subunit A, domain 2"/>
    <property type="match status" value="1"/>
</dbReference>
<dbReference type="Gene3D" id="3.50.50.60">
    <property type="entry name" value="FAD/NAD(P)-binding domain"/>
    <property type="match status" value="2"/>
</dbReference>
<dbReference type="HAMAP" id="MF_01202">
    <property type="entry name" value="DadA"/>
    <property type="match status" value="1"/>
</dbReference>
<dbReference type="InterPro" id="IPR023080">
    <property type="entry name" value="DadA"/>
</dbReference>
<dbReference type="InterPro" id="IPR006076">
    <property type="entry name" value="FAD-dep_OxRdtase"/>
</dbReference>
<dbReference type="InterPro" id="IPR036188">
    <property type="entry name" value="FAD/NAD-bd_sf"/>
</dbReference>
<dbReference type="NCBIfam" id="NF001933">
    <property type="entry name" value="PRK00711.1"/>
    <property type="match status" value="1"/>
</dbReference>
<dbReference type="PANTHER" id="PTHR13847:SF280">
    <property type="entry name" value="D-AMINO ACID DEHYDROGENASE"/>
    <property type="match status" value="1"/>
</dbReference>
<dbReference type="PANTHER" id="PTHR13847">
    <property type="entry name" value="SARCOSINE DEHYDROGENASE-RELATED"/>
    <property type="match status" value="1"/>
</dbReference>
<dbReference type="Pfam" id="PF01266">
    <property type="entry name" value="DAO"/>
    <property type="match status" value="1"/>
</dbReference>
<dbReference type="SUPFAM" id="SSF54373">
    <property type="entry name" value="FAD-linked reductases, C-terminal domain"/>
    <property type="match status" value="1"/>
</dbReference>
<dbReference type="SUPFAM" id="SSF51905">
    <property type="entry name" value="FAD/NAD(P)-binding domain"/>
    <property type="match status" value="1"/>
</dbReference>
<protein>
    <recommendedName>
        <fullName evidence="1">D-amino acid dehydrogenase</fullName>
        <ecNumber evidence="1">1.4.99.-</ecNumber>
    </recommendedName>
</protein>
<name>DADA_ECO24</name>
<proteinExistence type="inferred from homology"/>
<feature type="chain" id="PRO_1000066090" description="D-amino acid dehydrogenase">
    <location>
        <begin position="1"/>
        <end position="432"/>
    </location>
</feature>
<feature type="binding site" evidence="1">
    <location>
        <begin position="3"/>
        <end position="17"/>
    </location>
    <ligand>
        <name>FAD</name>
        <dbReference type="ChEBI" id="CHEBI:57692"/>
    </ligand>
</feature>
<gene>
    <name evidence="1" type="primary">dadA</name>
    <name type="ordered locus">EcE24377A_1334</name>
</gene>
<accession>A7ZKW0</accession>
<comment type="function">
    <text evidence="1">Oxidative deamination of D-amino acids.</text>
</comment>
<comment type="catalytic activity">
    <reaction evidence="1">
        <text>a D-alpha-amino acid + A + H2O = a 2-oxocarboxylate + AH2 + NH4(+)</text>
        <dbReference type="Rhea" id="RHEA:18125"/>
        <dbReference type="ChEBI" id="CHEBI:13193"/>
        <dbReference type="ChEBI" id="CHEBI:15377"/>
        <dbReference type="ChEBI" id="CHEBI:17499"/>
        <dbReference type="ChEBI" id="CHEBI:28938"/>
        <dbReference type="ChEBI" id="CHEBI:35179"/>
        <dbReference type="ChEBI" id="CHEBI:59871"/>
    </reaction>
</comment>
<comment type="cofactor">
    <cofactor evidence="1">
        <name>FAD</name>
        <dbReference type="ChEBI" id="CHEBI:57692"/>
    </cofactor>
</comment>
<comment type="pathway">
    <text>Amino-acid degradation; D-alanine degradation; NH(3) and pyruvate from D-alanine: step 1/1.</text>
</comment>
<comment type="similarity">
    <text evidence="1">Belongs to the DadA oxidoreductase family.</text>
</comment>
<keyword id="KW-0274">FAD</keyword>
<keyword id="KW-0285">Flavoprotein</keyword>
<keyword id="KW-0560">Oxidoreductase</keyword>
<keyword id="KW-1185">Reference proteome</keyword>